<organism>
    <name type="scientific">Macaca fascicularis</name>
    <name type="common">Crab-eating macaque</name>
    <name type="synonym">Cynomolgus monkey</name>
    <dbReference type="NCBI Taxonomy" id="9541"/>
    <lineage>
        <taxon>Eukaryota</taxon>
        <taxon>Metazoa</taxon>
        <taxon>Chordata</taxon>
        <taxon>Craniata</taxon>
        <taxon>Vertebrata</taxon>
        <taxon>Euteleostomi</taxon>
        <taxon>Mammalia</taxon>
        <taxon>Eutheria</taxon>
        <taxon>Euarchontoglires</taxon>
        <taxon>Primates</taxon>
        <taxon>Haplorrhini</taxon>
        <taxon>Catarrhini</taxon>
        <taxon>Cercopithecidae</taxon>
        <taxon>Cercopithecinae</taxon>
        <taxon>Macaca</taxon>
    </lineage>
</organism>
<comment type="function">
    <text evidence="2">Transcription regulator that may syncronize transcriptional and translational programs.</text>
</comment>
<comment type="subcellular location">
    <subcellularLocation>
        <location evidence="1">Nucleus</location>
    </subcellularLocation>
</comment>
<comment type="domain">
    <text evidence="2">The protein contains a transactivation domain (TAD) which may be required for transcriptional activation of a subset of target genes.</text>
</comment>
<comment type="similarity">
    <text evidence="4">Belongs to the ATOS family.</text>
</comment>
<gene>
    <name evidence="2" type="primary">ATOSB</name>
    <name evidence="2" type="synonym">FAM214B</name>
    <name type="ORF">QtsA-18863</name>
</gene>
<proteinExistence type="evidence at transcript level"/>
<feature type="chain" id="PRO_0000313621" description="Atos homolog protein B">
    <location>
        <begin position="1"/>
        <end position="538"/>
    </location>
</feature>
<feature type="region of interest" description="Disordered" evidence="3">
    <location>
        <begin position="1"/>
        <end position="103"/>
    </location>
</feature>
<feature type="region of interest" description="Disordered" evidence="3">
    <location>
        <begin position="156"/>
        <end position="185"/>
    </location>
</feature>
<feature type="region of interest" description="Disordered" evidence="3">
    <location>
        <begin position="197"/>
        <end position="308"/>
    </location>
</feature>
<feature type="region of interest" description="Required for macropage invasion" evidence="2">
    <location>
        <begin position="348"/>
        <end position="430"/>
    </location>
</feature>
<feature type="region of interest" description="Transactivation domain 1 (TAD1)" evidence="2">
    <location>
        <begin position="436"/>
        <end position="444"/>
    </location>
</feature>
<feature type="compositionally biased region" description="Low complexity" evidence="3">
    <location>
        <begin position="1"/>
        <end position="18"/>
    </location>
</feature>
<feature type="compositionally biased region" description="Pro residues" evidence="3">
    <location>
        <begin position="227"/>
        <end position="238"/>
    </location>
</feature>
<feature type="compositionally biased region" description="Polar residues" evidence="3">
    <location>
        <begin position="274"/>
        <end position="286"/>
    </location>
</feature>
<feature type="modified residue" description="Phosphoserine" evidence="2">
    <location>
        <position position="254"/>
    </location>
</feature>
<feature type="modified residue" description="Phosphoserine" evidence="2">
    <location>
        <position position="255"/>
    </location>
</feature>
<accession>Q4R676</accession>
<reference key="1">
    <citation type="submission" date="2005-06" db="EMBL/GenBank/DDBJ databases">
        <title>DNA sequences of macaque genes expressed in brain or testis and its evolutionary implications.</title>
        <authorList>
            <consortium name="International consortium for macaque cDNA sequencing and analysis"/>
        </authorList>
    </citation>
    <scope>NUCLEOTIDE SEQUENCE [LARGE SCALE MRNA]</scope>
    <source>
        <tissue>Testis</tissue>
    </source>
</reference>
<protein>
    <recommendedName>
        <fullName>Atos homolog protein B</fullName>
    </recommendedName>
</protein>
<sequence length="538" mass="56775">MRHVQAEPSPSSEPEAGPSQPPVRQGALQGGLLMGYSPAGGATSPGVYQVSIFSPPAGTSEPHRALKRQAPPTEGPRELKRGPGLGAREGLPPEEPSTVGLLGPEGLGLGLGVASQHFSHRGLCVVEQRSSVTSSWTSGTWSPPCPPSNASCNTLHTRDWASPDPGGHGSLGESPGPAPPGQLHTLDTDLHSLAQIGGKSPVAGVGNGGSLWPRESPGTANGHSPEHTPPGPGPPGPCPTKRRLLPAGEAPDVSSEEEGPAPRRRRGSLGHPTAANSSDAKATSFWSHLLPGPKEPVLDPTDCSPMGRRLKGARRLKLSPLRSLRKGPGLLSPPSASPVPTPAVSRTLLGNFEESLLRGRFAPSGHIEGFTAEIGASGSYCPQHVTLPVTVTFFDVSEQNAPAPFLGIVDLNPLGRKGYSVPKVGTVQVTLFNPNQTVVKMFLVTFDFSDMPAAHMTFLRHRLFLVPVGEEGNANPTHRLLCYLLHLRFRSSRSGRLSLHGDIRLLFSRRSLELDTGLPYELQAVTEAPHNPRYSPLP</sequence>
<evidence type="ECO:0000250" key="1">
    <source>
        <dbReference type="UniProtKB" id="Q7JXG9"/>
    </source>
</evidence>
<evidence type="ECO:0000250" key="2">
    <source>
        <dbReference type="UniProtKB" id="Q8BR27"/>
    </source>
</evidence>
<evidence type="ECO:0000256" key="3">
    <source>
        <dbReference type="SAM" id="MobiDB-lite"/>
    </source>
</evidence>
<evidence type="ECO:0000305" key="4"/>
<dbReference type="EMBL" id="AB169313">
    <property type="protein sequence ID" value="BAE01399.1"/>
    <property type="molecule type" value="mRNA"/>
</dbReference>
<dbReference type="RefSeq" id="NP_001271548.1">
    <property type="nucleotide sequence ID" value="NM_001284619.1"/>
</dbReference>
<dbReference type="STRING" id="9541.ENSMFAP00000023801"/>
<dbReference type="eggNOG" id="KOG2306">
    <property type="taxonomic scope" value="Eukaryota"/>
</dbReference>
<dbReference type="Proteomes" id="UP000233100">
    <property type="component" value="Unplaced"/>
</dbReference>
<dbReference type="GO" id="GO:0005634">
    <property type="term" value="C:nucleus"/>
    <property type="evidence" value="ECO:0007669"/>
    <property type="project" value="UniProtKB-SubCell"/>
</dbReference>
<dbReference type="InterPro" id="IPR033473">
    <property type="entry name" value="Atos-like_C"/>
</dbReference>
<dbReference type="InterPro" id="IPR025261">
    <property type="entry name" value="Atos-like_cons_dom"/>
</dbReference>
<dbReference type="InterPro" id="IPR051506">
    <property type="entry name" value="ATOS_Transcription_Regulators"/>
</dbReference>
<dbReference type="PANTHER" id="PTHR13199:SF12">
    <property type="entry name" value="ATOS HOMOLOG PROTEIN B"/>
    <property type="match status" value="1"/>
</dbReference>
<dbReference type="PANTHER" id="PTHR13199">
    <property type="entry name" value="GH03947P"/>
    <property type="match status" value="1"/>
</dbReference>
<dbReference type="Pfam" id="PF13889">
    <property type="entry name" value="Chromosome_seg"/>
    <property type="match status" value="1"/>
</dbReference>
<dbReference type="Pfam" id="PF13915">
    <property type="entry name" value="DUF4210"/>
    <property type="match status" value="1"/>
</dbReference>
<dbReference type="SMART" id="SM01177">
    <property type="entry name" value="DUF4210"/>
    <property type="match status" value="1"/>
</dbReference>
<keyword id="KW-0539">Nucleus</keyword>
<keyword id="KW-0597">Phosphoprotein</keyword>
<keyword id="KW-1185">Reference proteome</keyword>
<name>ATOSB_MACFA</name>